<feature type="chain" id="PRO_0000197478" description="Glutathione synthetase">
    <location>
        <begin position="1"/>
        <end position="319"/>
    </location>
</feature>
<feature type="domain" description="ATP-grasp" evidence="2">
    <location>
        <begin position="125"/>
        <end position="311"/>
    </location>
</feature>
<feature type="binding site" evidence="2">
    <location>
        <begin position="151"/>
        <end position="208"/>
    </location>
    <ligand>
        <name>ATP</name>
        <dbReference type="ChEBI" id="CHEBI:30616"/>
    </ligand>
</feature>
<feature type="binding site" evidence="2">
    <location>
        <position position="282"/>
    </location>
    <ligand>
        <name>Mg(2+)</name>
        <dbReference type="ChEBI" id="CHEBI:18420"/>
    </ligand>
</feature>
<feature type="binding site" evidence="2">
    <location>
        <position position="284"/>
    </location>
    <ligand>
        <name>Mg(2+)</name>
        <dbReference type="ChEBI" id="CHEBI:18420"/>
    </ligand>
</feature>
<sequence length="319" mass="35337">MSVRLGIVMDPIERISYKKDSSLAMLLAAQDRGWTLFYMEQKDLYQNAGQARARMKPLKVFADPAKWFEFEAEIDAGLDDLDVILMRKDPPFDMEFIYTTYLLEQAESAGVLVVNKPQSLRDCNEKLFATLFPQCTPPTLVSRRADILREFAEQQGDVILKPLDGMGGASIFRHRAGDPNLSVILETLTAHGTQQIMAQGYLPAIKDGDKRILMVDGEPVPYCLARIPAAGETRGNLAAGGRGEARPLSDKDRWIAEQIGPTLREKGLLFVGLDVIGEHLTEINVTSPTCIREIDNAFGTNIGGLLMDAIEKKLQARKG</sequence>
<keyword id="KW-0067">ATP-binding</keyword>
<keyword id="KW-0317">Glutathione biosynthesis</keyword>
<keyword id="KW-0436">Ligase</keyword>
<keyword id="KW-0460">Magnesium</keyword>
<keyword id="KW-0464">Manganese</keyword>
<keyword id="KW-0479">Metal-binding</keyword>
<keyword id="KW-0547">Nucleotide-binding</keyword>
<keyword id="KW-1185">Reference proteome</keyword>
<proteinExistence type="inferred from homology"/>
<gene>
    <name evidence="2" type="primary">gshB</name>
    <name type="ordered locus">PSPTO_5035</name>
</gene>
<comment type="catalytic activity">
    <reaction evidence="2">
        <text>gamma-L-glutamyl-L-cysteine + glycine + ATP = glutathione + ADP + phosphate + H(+)</text>
        <dbReference type="Rhea" id="RHEA:13557"/>
        <dbReference type="ChEBI" id="CHEBI:15378"/>
        <dbReference type="ChEBI" id="CHEBI:30616"/>
        <dbReference type="ChEBI" id="CHEBI:43474"/>
        <dbReference type="ChEBI" id="CHEBI:57305"/>
        <dbReference type="ChEBI" id="CHEBI:57925"/>
        <dbReference type="ChEBI" id="CHEBI:58173"/>
        <dbReference type="ChEBI" id="CHEBI:456216"/>
        <dbReference type="EC" id="6.3.2.3"/>
    </reaction>
</comment>
<comment type="cofactor">
    <cofactor evidence="1">
        <name>Mg(2+)</name>
        <dbReference type="ChEBI" id="CHEBI:18420"/>
    </cofactor>
    <cofactor evidence="1">
        <name>Mn(2+)</name>
        <dbReference type="ChEBI" id="CHEBI:29035"/>
    </cofactor>
    <text evidence="1">Binds 1 Mg(2+) or Mn(2+) ion per subunit.</text>
</comment>
<comment type="pathway">
    <text evidence="2">Sulfur metabolism; glutathione biosynthesis; glutathione from L-cysteine and L-glutamate: step 2/2.</text>
</comment>
<comment type="similarity">
    <text evidence="2">Belongs to the prokaryotic GSH synthase family.</text>
</comment>
<name>GSHB_PSESM</name>
<organism>
    <name type="scientific">Pseudomonas syringae pv. tomato (strain ATCC BAA-871 / DC3000)</name>
    <dbReference type="NCBI Taxonomy" id="223283"/>
    <lineage>
        <taxon>Bacteria</taxon>
        <taxon>Pseudomonadati</taxon>
        <taxon>Pseudomonadota</taxon>
        <taxon>Gammaproteobacteria</taxon>
        <taxon>Pseudomonadales</taxon>
        <taxon>Pseudomonadaceae</taxon>
        <taxon>Pseudomonas</taxon>
    </lineage>
</organism>
<dbReference type="EC" id="6.3.2.3" evidence="2"/>
<dbReference type="EMBL" id="AE016853">
    <property type="protein sequence ID" value="AAO58463.1"/>
    <property type="molecule type" value="Genomic_DNA"/>
</dbReference>
<dbReference type="RefSeq" id="NP_794768.1">
    <property type="nucleotide sequence ID" value="NC_004578.1"/>
</dbReference>
<dbReference type="RefSeq" id="WP_003377199.1">
    <property type="nucleotide sequence ID" value="NC_004578.1"/>
</dbReference>
<dbReference type="SMR" id="Q87VA4"/>
<dbReference type="STRING" id="223283.PSPTO_5035"/>
<dbReference type="GeneID" id="1186720"/>
<dbReference type="KEGG" id="pst:PSPTO_5035"/>
<dbReference type="PATRIC" id="fig|223283.9.peg.5154"/>
<dbReference type="eggNOG" id="COG0189">
    <property type="taxonomic scope" value="Bacteria"/>
</dbReference>
<dbReference type="HOGENOM" id="CLU_068239_0_0_6"/>
<dbReference type="OrthoDB" id="9785415at2"/>
<dbReference type="PhylomeDB" id="Q87VA4"/>
<dbReference type="UniPathway" id="UPA00142">
    <property type="reaction ID" value="UER00210"/>
</dbReference>
<dbReference type="Proteomes" id="UP000002515">
    <property type="component" value="Chromosome"/>
</dbReference>
<dbReference type="GO" id="GO:0005737">
    <property type="term" value="C:cytoplasm"/>
    <property type="evidence" value="ECO:0007669"/>
    <property type="project" value="TreeGrafter"/>
</dbReference>
<dbReference type="GO" id="GO:0005524">
    <property type="term" value="F:ATP binding"/>
    <property type="evidence" value="ECO:0007669"/>
    <property type="project" value="UniProtKB-UniRule"/>
</dbReference>
<dbReference type="GO" id="GO:0004363">
    <property type="term" value="F:glutathione synthase activity"/>
    <property type="evidence" value="ECO:0007669"/>
    <property type="project" value="UniProtKB-UniRule"/>
</dbReference>
<dbReference type="GO" id="GO:0046872">
    <property type="term" value="F:metal ion binding"/>
    <property type="evidence" value="ECO:0007669"/>
    <property type="project" value="UniProtKB-KW"/>
</dbReference>
<dbReference type="FunFam" id="3.30.1490.20:FF:000009">
    <property type="entry name" value="Glutathione synthetase"/>
    <property type="match status" value="1"/>
</dbReference>
<dbReference type="FunFam" id="3.30.470.20:FF:000010">
    <property type="entry name" value="Glutathione synthetase"/>
    <property type="match status" value="1"/>
</dbReference>
<dbReference type="FunFam" id="3.40.50.20:FF:000009">
    <property type="entry name" value="Glutathione synthetase"/>
    <property type="match status" value="1"/>
</dbReference>
<dbReference type="Gene3D" id="3.40.50.20">
    <property type="match status" value="1"/>
</dbReference>
<dbReference type="Gene3D" id="3.30.1490.20">
    <property type="entry name" value="ATP-grasp fold, A domain"/>
    <property type="match status" value="1"/>
</dbReference>
<dbReference type="Gene3D" id="3.30.470.20">
    <property type="entry name" value="ATP-grasp fold, B domain"/>
    <property type="match status" value="1"/>
</dbReference>
<dbReference type="HAMAP" id="MF_00162">
    <property type="entry name" value="GSH_S"/>
    <property type="match status" value="1"/>
</dbReference>
<dbReference type="InterPro" id="IPR011761">
    <property type="entry name" value="ATP-grasp"/>
</dbReference>
<dbReference type="InterPro" id="IPR013815">
    <property type="entry name" value="ATP_grasp_subdomain_1"/>
</dbReference>
<dbReference type="InterPro" id="IPR006284">
    <property type="entry name" value="Glut_synth_pro"/>
</dbReference>
<dbReference type="InterPro" id="IPR004218">
    <property type="entry name" value="GSHS_ATP-bd"/>
</dbReference>
<dbReference type="InterPro" id="IPR004215">
    <property type="entry name" value="GSHS_N"/>
</dbReference>
<dbReference type="InterPro" id="IPR016185">
    <property type="entry name" value="PreATP-grasp_dom_sf"/>
</dbReference>
<dbReference type="NCBIfam" id="TIGR01380">
    <property type="entry name" value="glut_syn"/>
    <property type="match status" value="1"/>
</dbReference>
<dbReference type="NCBIfam" id="NF003573">
    <property type="entry name" value="PRK05246.1"/>
    <property type="match status" value="1"/>
</dbReference>
<dbReference type="PANTHER" id="PTHR21621:SF4">
    <property type="entry name" value="GLUTATHIONE SYNTHETASE"/>
    <property type="match status" value="1"/>
</dbReference>
<dbReference type="PANTHER" id="PTHR21621">
    <property type="entry name" value="RIBOSOMAL PROTEIN S6 MODIFICATION PROTEIN"/>
    <property type="match status" value="1"/>
</dbReference>
<dbReference type="Pfam" id="PF02955">
    <property type="entry name" value="GSH-S_ATP"/>
    <property type="match status" value="1"/>
</dbReference>
<dbReference type="Pfam" id="PF02951">
    <property type="entry name" value="GSH-S_N"/>
    <property type="match status" value="1"/>
</dbReference>
<dbReference type="SUPFAM" id="SSF56059">
    <property type="entry name" value="Glutathione synthetase ATP-binding domain-like"/>
    <property type="match status" value="1"/>
</dbReference>
<dbReference type="SUPFAM" id="SSF52440">
    <property type="entry name" value="PreATP-grasp domain"/>
    <property type="match status" value="1"/>
</dbReference>
<dbReference type="PROSITE" id="PS50975">
    <property type="entry name" value="ATP_GRASP"/>
    <property type="match status" value="1"/>
</dbReference>
<evidence type="ECO:0000250" key="1"/>
<evidence type="ECO:0000255" key="2">
    <source>
        <dbReference type="HAMAP-Rule" id="MF_00162"/>
    </source>
</evidence>
<reference key="1">
    <citation type="journal article" date="2003" name="Proc. Natl. Acad. Sci. U.S.A.">
        <title>The complete genome sequence of the Arabidopsis and tomato pathogen Pseudomonas syringae pv. tomato DC3000.</title>
        <authorList>
            <person name="Buell C.R."/>
            <person name="Joardar V."/>
            <person name="Lindeberg M."/>
            <person name="Selengut J."/>
            <person name="Paulsen I.T."/>
            <person name="Gwinn M.L."/>
            <person name="Dodson R.J."/>
            <person name="DeBoy R.T."/>
            <person name="Durkin A.S."/>
            <person name="Kolonay J.F."/>
            <person name="Madupu R."/>
            <person name="Daugherty S.C."/>
            <person name="Brinkac L.M."/>
            <person name="Beanan M.J."/>
            <person name="Haft D.H."/>
            <person name="Nelson W.C."/>
            <person name="Davidsen T.M."/>
            <person name="Zafar N."/>
            <person name="Zhou L."/>
            <person name="Liu J."/>
            <person name="Yuan Q."/>
            <person name="Khouri H.M."/>
            <person name="Fedorova N.B."/>
            <person name="Tran B."/>
            <person name="Russell D."/>
            <person name="Berry K.J."/>
            <person name="Utterback T.R."/>
            <person name="Van Aken S.E."/>
            <person name="Feldblyum T.V."/>
            <person name="D'Ascenzo M."/>
            <person name="Deng W.-L."/>
            <person name="Ramos A.R."/>
            <person name="Alfano J.R."/>
            <person name="Cartinhour S."/>
            <person name="Chatterjee A.K."/>
            <person name="Delaney T.P."/>
            <person name="Lazarowitz S.G."/>
            <person name="Martin G.B."/>
            <person name="Schneider D.J."/>
            <person name="Tang X."/>
            <person name="Bender C.L."/>
            <person name="White O."/>
            <person name="Fraser C.M."/>
            <person name="Collmer A."/>
        </authorList>
    </citation>
    <scope>NUCLEOTIDE SEQUENCE [LARGE SCALE GENOMIC DNA]</scope>
    <source>
        <strain>ATCC BAA-871 / DC3000</strain>
    </source>
</reference>
<protein>
    <recommendedName>
        <fullName evidence="2">Glutathione synthetase</fullName>
        <ecNumber evidence="2">6.3.2.3</ecNumber>
    </recommendedName>
    <alternativeName>
        <fullName evidence="2">GSH synthetase</fullName>
        <shortName evidence="2">GSH-S</shortName>
        <shortName evidence="2">GSHase</shortName>
    </alternativeName>
    <alternativeName>
        <fullName evidence="2">Glutathione synthase</fullName>
    </alternativeName>
</protein>
<accession>Q87VA4</accession>